<reference key="1">
    <citation type="journal article" date="1989" name="Biochem. J.">
        <title>Cloning and structural characterization of the genes coding for adenosylcobalamin-dependent methylmalonyl-CoA mutase from Propionibacterium shermanii.</title>
        <authorList>
            <person name="Marsh E.N."/>
            <person name="McKie N."/>
            <person name="Davis N.K."/>
            <person name="Leadlay P.F."/>
        </authorList>
    </citation>
    <scope>NUCLEOTIDE SEQUENCE [GENOMIC DNA]</scope>
    <scope>PROTEIN SEQUENCE OF 4-9; 96-100; 302-306; 473-478 AND 523-527</scope>
    <source>
        <strain>NCIMB 9885</strain>
    </source>
</reference>
<reference key="2">
    <citation type="journal article" date="1989" name="Biochem. J.">
        <title>Methylmalonyl-CoA mutase from Propionibacterium shermanii. Evidence for the presence of two masked cysteine residues.</title>
        <authorList>
            <person name="Marsh E.N."/>
            <person name="Leadlay P.F."/>
        </authorList>
    </citation>
    <scope>PROTEIN SEQUENCE OF 515-518</scope>
    <source>
        <strain>NCIMB 9885</strain>
    </source>
</reference>
<reference key="3">
    <citation type="journal article" date="1996" name="Structure">
        <title>How coenzyme B12 radicals are generated: the crystal structure of methylmalonyl-coenzyme A mutase at 2-A resolution.</title>
        <authorList>
            <person name="Mancia F."/>
            <person name="Keep N.H."/>
            <person name="Nakagawa A."/>
            <person name="Leadlay P.F."/>
            <person name="McSweeney S."/>
            <person name="Rasmussen B."/>
            <person name="Bosecke P."/>
            <person name="Diat O."/>
            <person name="Evans P.R."/>
        </authorList>
    </citation>
    <scope>X-RAY CRYSTALLOGRAPHY (2.0 ANGSTROMS)</scope>
    <source>
        <strain>NCIMB 9885</strain>
    </source>
</reference>
<reference key="4">
    <citation type="journal article" date="1998" name="Structure">
        <title>Conformational changes on substrate binding to methylmalonyl CoA mutase and new insights into the free radical mechanism.</title>
        <authorList>
            <person name="Mancia F."/>
            <person name="Evans P.R."/>
        </authorList>
    </citation>
    <scope>X-RAY CRYSTALLOGRAPHY (2.5 ANGSTROMS)</scope>
    <source>
        <strain>NCIMB 9885</strain>
    </source>
</reference>
<dbReference type="EC" id="5.4.99.2"/>
<dbReference type="EMBL" id="X14965">
    <property type="protein sequence ID" value="CAA33089.1"/>
    <property type="molecule type" value="Genomic_DNA"/>
</dbReference>
<dbReference type="PIR" id="S04640">
    <property type="entry name" value="S04640"/>
</dbReference>
<dbReference type="PDB" id="1E1C">
    <property type="method" value="X-ray"/>
    <property type="resolution" value="2.62 A"/>
    <property type="chains" value="B/D=2-638"/>
</dbReference>
<dbReference type="PDB" id="1REQ">
    <property type="method" value="X-ray"/>
    <property type="resolution" value="2.00 A"/>
    <property type="chains" value="B/D=2-638"/>
</dbReference>
<dbReference type="PDB" id="2REQ">
    <property type="method" value="X-ray"/>
    <property type="resolution" value="2.50 A"/>
    <property type="chains" value="B/D=2-638"/>
</dbReference>
<dbReference type="PDB" id="3REQ">
    <property type="method" value="X-ray"/>
    <property type="resolution" value="2.70 A"/>
    <property type="chains" value="B=2-638"/>
</dbReference>
<dbReference type="PDB" id="4REQ">
    <property type="method" value="X-ray"/>
    <property type="resolution" value="2.20 A"/>
    <property type="chains" value="B/D=2-638"/>
</dbReference>
<dbReference type="PDB" id="5REQ">
    <property type="method" value="X-ray"/>
    <property type="resolution" value="2.20 A"/>
    <property type="chains" value="B/D=2-638"/>
</dbReference>
<dbReference type="PDB" id="6REQ">
    <property type="method" value="X-ray"/>
    <property type="resolution" value="2.20 A"/>
    <property type="chains" value="B/D=2-638"/>
</dbReference>
<dbReference type="PDB" id="7REQ">
    <property type="method" value="X-ray"/>
    <property type="resolution" value="2.20 A"/>
    <property type="chains" value="B/D=2-638"/>
</dbReference>
<dbReference type="PDBsum" id="1E1C"/>
<dbReference type="PDBsum" id="1REQ"/>
<dbReference type="PDBsum" id="2REQ"/>
<dbReference type="PDBsum" id="3REQ"/>
<dbReference type="PDBsum" id="4REQ"/>
<dbReference type="PDBsum" id="5REQ"/>
<dbReference type="PDBsum" id="6REQ"/>
<dbReference type="PDBsum" id="7REQ"/>
<dbReference type="SMR" id="P11652"/>
<dbReference type="DIP" id="DIP-6149N"/>
<dbReference type="IntAct" id="P11652">
    <property type="interactions" value="1"/>
</dbReference>
<dbReference type="MINT" id="P11652"/>
<dbReference type="BioCyc" id="MetaCyc:MONOMER-13076"/>
<dbReference type="BRENDA" id="5.4.99.2">
    <property type="organism ID" value="5032"/>
</dbReference>
<dbReference type="SABIO-RK" id="P11652"/>
<dbReference type="UniPathway" id="UPA00945">
    <property type="reaction ID" value="UER00910"/>
</dbReference>
<dbReference type="EvolutionaryTrace" id="P11652"/>
<dbReference type="GO" id="GO:0005737">
    <property type="term" value="C:cytoplasm"/>
    <property type="evidence" value="ECO:0007669"/>
    <property type="project" value="TreeGrafter"/>
</dbReference>
<dbReference type="GO" id="GO:0031419">
    <property type="term" value="F:cobalamin binding"/>
    <property type="evidence" value="ECO:0007669"/>
    <property type="project" value="UniProtKB-KW"/>
</dbReference>
<dbReference type="GO" id="GO:0046872">
    <property type="term" value="F:metal ion binding"/>
    <property type="evidence" value="ECO:0007669"/>
    <property type="project" value="InterPro"/>
</dbReference>
<dbReference type="GO" id="GO:0004494">
    <property type="term" value="F:methylmalonyl-CoA mutase activity"/>
    <property type="evidence" value="ECO:0007669"/>
    <property type="project" value="UniProtKB-EC"/>
</dbReference>
<dbReference type="GO" id="GO:0019652">
    <property type="term" value="P:lactate fermentation to propionate and acetate"/>
    <property type="evidence" value="ECO:0007669"/>
    <property type="project" value="InterPro"/>
</dbReference>
<dbReference type="GO" id="GO:0019678">
    <property type="term" value="P:propionate metabolic process, methylmalonyl pathway"/>
    <property type="evidence" value="ECO:0007669"/>
    <property type="project" value="TreeGrafter"/>
</dbReference>
<dbReference type="CDD" id="cd03677">
    <property type="entry name" value="MM_CoA_mutase_beta"/>
    <property type="match status" value="1"/>
</dbReference>
<dbReference type="Gene3D" id="1.10.196.20">
    <property type="match status" value="1"/>
</dbReference>
<dbReference type="Gene3D" id="3.40.50.280">
    <property type="entry name" value="Cobalamin-binding domain"/>
    <property type="match status" value="1"/>
</dbReference>
<dbReference type="Gene3D" id="3.20.20.240">
    <property type="entry name" value="Methylmalonyl-CoA mutase"/>
    <property type="match status" value="1"/>
</dbReference>
<dbReference type="InterPro" id="IPR016176">
    <property type="entry name" value="Cbl-dep_enz_cat"/>
</dbReference>
<dbReference type="InterPro" id="IPR036724">
    <property type="entry name" value="Cobalamin-bd_sf"/>
</dbReference>
<dbReference type="InterPro" id="IPR024067">
    <property type="entry name" value="Me-malonyl-CoA_mutase_sm_su_N"/>
</dbReference>
<dbReference type="InterPro" id="IPR006099">
    <property type="entry name" value="MeMalonylCoA_mutase_a/b_cat"/>
</dbReference>
<dbReference type="InterPro" id="IPR004608">
    <property type="entry name" value="MMCoA_mutase_b"/>
</dbReference>
<dbReference type="NCBIfam" id="TIGR00642">
    <property type="entry name" value="mmCoA_mut_beta"/>
    <property type="match status" value="1"/>
</dbReference>
<dbReference type="PANTHER" id="PTHR48101:SF4">
    <property type="entry name" value="METHYLMALONYL-COA MUTASE, MITOCHONDRIAL"/>
    <property type="match status" value="1"/>
</dbReference>
<dbReference type="PANTHER" id="PTHR48101">
    <property type="entry name" value="METHYLMALONYL-COA MUTASE, MITOCHONDRIAL-RELATED"/>
    <property type="match status" value="1"/>
</dbReference>
<dbReference type="Pfam" id="PF01642">
    <property type="entry name" value="MM_CoA_mutase"/>
    <property type="match status" value="1"/>
</dbReference>
<dbReference type="SUPFAM" id="SSF52242">
    <property type="entry name" value="Cobalamin (vitamin B12)-binding domain"/>
    <property type="match status" value="1"/>
</dbReference>
<dbReference type="SUPFAM" id="SSF51703">
    <property type="entry name" value="Cobalamin (vitamin B12)-dependent enzymes"/>
    <property type="match status" value="1"/>
</dbReference>
<dbReference type="PROSITE" id="PS00544">
    <property type="entry name" value="METMALONYL_COA_MUTASE"/>
    <property type="match status" value="1"/>
</dbReference>
<feature type="initiator methionine" description="Removed">
    <location>
        <position position="1"/>
    </location>
</feature>
<feature type="chain" id="PRO_0000194268" description="Methylmalonyl-CoA mutase small subunit">
    <location>
        <begin position="2"/>
        <end position="638"/>
    </location>
</feature>
<feature type="region of interest" description="Disordered" evidence="1">
    <location>
        <begin position="1"/>
        <end position="34"/>
    </location>
</feature>
<feature type="compositionally biased region" description="Polar residues" evidence="1">
    <location>
        <begin position="1"/>
        <end position="11"/>
    </location>
</feature>
<feature type="helix" evidence="3">
    <location>
        <begin position="24"/>
        <end position="26"/>
    </location>
</feature>
<feature type="helix" evidence="3">
    <location>
        <begin position="32"/>
        <end position="44"/>
    </location>
</feature>
<feature type="strand" evidence="5">
    <location>
        <begin position="49"/>
        <end position="51"/>
    </location>
</feature>
<feature type="helix" evidence="3">
    <location>
        <begin position="55"/>
        <end position="62"/>
    </location>
</feature>
<feature type="helix" evidence="3">
    <location>
        <begin position="78"/>
        <end position="80"/>
    </location>
</feature>
<feature type="strand" evidence="6">
    <location>
        <begin position="102"/>
        <end position="104"/>
    </location>
</feature>
<feature type="strand" evidence="3">
    <location>
        <begin position="107"/>
        <end position="113"/>
    </location>
</feature>
<feature type="helix" evidence="3">
    <location>
        <begin position="118"/>
        <end position="129"/>
    </location>
</feature>
<feature type="turn" evidence="3">
    <location>
        <begin position="130"/>
        <end position="132"/>
    </location>
</feature>
<feature type="strand" evidence="3">
    <location>
        <begin position="135"/>
        <end position="141"/>
    </location>
</feature>
<feature type="turn" evidence="3">
    <location>
        <begin position="147"/>
        <end position="149"/>
    </location>
</feature>
<feature type="helix" evidence="3">
    <location>
        <begin position="150"/>
        <end position="153"/>
    </location>
</feature>
<feature type="turn" evidence="6">
    <location>
        <begin position="154"/>
        <end position="156"/>
    </location>
</feature>
<feature type="turn" evidence="3">
    <location>
        <begin position="159"/>
        <end position="161"/>
    </location>
</feature>
<feature type="strand" evidence="3">
    <location>
        <begin position="163"/>
        <end position="167"/>
    </location>
</feature>
<feature type="helix" evidence="3">
    <location>
        <begin position="172"/>
        <end position="184"/>
    </location>
</feature>
<feature type="strand" evidence="3">
    <location>
        <begin position="186"/>
        <end position="188"/>
    </location>
</feature>
<feature type="helix" evidence="3">
    <location>
        <begin position="190"/>
        <end position="192"/>
    </location>
</feature>
<feature type="strand" evidence="3">
    <location>
        <begin position="195"/>
        <end position="199"/>
    </location>
</feature>
<feature type="helix" evidence="3">
    <location>
        <begin position="201"/>
        <end position="208"/>
    </location>
</feature>
<feature type="helix" evidence="4">
    <location>
        <begin position="214"/>
        <end position="216"/>
    </location>
</feature>
<feature type="helix" evidence="3">
    <location>
        <begin position="217"/>
        <end position="223"/>
    </location>
</feature>
<feature type="strand" evidence="3">
    <location>
        <begin position="225"/>
        <end position="227"/>
    </location>
</feature>
<feature type="strand" evidence="3">
    <location>
        <begin position="232"/>
        <end position="237"/>
    </location>
</feature>
<feature type="helix" evidence="3">
    <location>
        <begin position="239"/>
        <end position="242"/>
    </location>
</feature>
<feature type="turn" evidence="3">
    <location>
        <begin position="243"/>
        <end position="245"/>
    </location>
</feature>
<feature type="helix" evidence="3">
    <location>
        <begin position="248"/>
        <end position="268"/>
    </location>
</feature>
<feature type="helix" evidence="3">
    <location>
        <begin position="273"/>
        <end position="277"/>
    </location>
</feature>
<feature type="strand" evidence="3">
    <location>
        <begin position="280"/>
        <end position="286"/>
    </location>
</feature>
<feature type="helix" evidence="3">
    <location>
        <begin position="290"/>
        <end position="311"/>
    </location>
</feature>
<feature type="helix" evidence="3">
    <location>
        <begin position="315"/>
        <end position="317"/>
    </location>
</feature>
<feature type="strand" evidence="3">
    <location>
        <begin position="322"/>
        <end position="326"/>
    </location>
</feature>
<feature type="helix" evidence="4">
    <location>
        <begin position="328"/>
        <end position="330"/>
    </location>
</feature>
<feature type="strand" evidence="3">
    <location>
        <begin position="333"/>
        <end position="335"/>
    </location>
</feature>
<feature type="helix" evidence="3">
    <location>
        <begin position="338"/>
        <end position="353"/>
    </location>
</feature>
<feature type="strand" evidence="3">
    <location>
        <begin position="356"/>
        <end position="359"/>
    </location>
</feature>
<feature type="turn" evidence="3">
    <location>
        <begin position="363"/>
        <end position="367"/>
    </location>
</feature>
<feature type="strand" evidence="3">
    <location>
        <begin position="369"/>
        <end position="373"/>
    </location>
</feature>
<feature type="helix" evidence="3">
    <location>
        <begin position="374"/>
        <end position="388"/>
    </location>
</feature>
<feature type="strand" evidence="3">
    <location>
        <begin position="394"/>
        <end position="396"/>
    </location>
</feature>
<feature type="turn" evidence="3">
    <location>
        <begin position="398"/>
        <end position="401"/>
    </location>
</feature>
<feature type="helix" evidence="3">
    <location>
        <begin position="403"/>
        <end position="425"/>
    </location>
</feature>
<feature type="helix" evidence="3">
    <location>
        <begin position="429"/>
        <end position="434"/>
    </location>
</feature>
<feature type="helix" evidence="3">
    <location>
        <begin position="437"/>
        <end position="454"/>
    </location>
</feature>
<feature type="turn" evidence="3">
    <location>
        <begin position="461"/>
        <end position="463"/>
    </location>
</feature>
<feature type="strand" evidence="3">
    <location>
        <begin position="464"/>
        <end position="466"/>
    </location>
</feature>
<feature type="helix" evidence="3">
    <location>
        <begin position="495"/>
        <end position="506"/>
    </location>
</feature>
<feature type="strand" evidence="3">
    <location>
        <begin position="507"/>
        <end position="509"/>
    </location>
</feature>
<feature type="strand" evidence="3">
    <location>
        <begin position="514"/>
        <end position="517"/>
    </location>
</feature>
<feature type="helix" evidence="3">
    <location>
        <begin position="521"/>
        <end position="537"/>
    </location>
</feature>
<feature type="strand" evidence="3">
    <location>
        <begin position="544"/>
        <end position="546"/>
    </location>
</feature>
<feature type="helix" evidence="3">
    <location>
        <begin position="550"/>
        <end position="560"/>
    </location>
</feature>
<feature type="strand" evidence="3">
    <location>
        <begin position="563"/>
        <end position="568"/>
    </location>
</feature>
<feature type="helix" evidence="3">
    <location>
        <begin position="571"/>
        <end position="587"/>
    </location>
</feature>
<feature type="strand" evidence="3">
    <location>
        <begin position="591"/>
        <end position="597"/>
    </location>
</feature>
<feature type="helix" evidence="3">
    <location>
        <begin position="599"/>
        <end position="605"/>
    </location>
</feature>
<feature type="helix" evidence="3">
    <location>
        <begin position="606"/>
        <end position="612"/>
    </location>
</feature>
<feature type="strand" evidence="6">
    <location>
        <begin position="615"/>
        <end position="617"/>
    </location>
</feature>
<feature type="helix" evidence="3">
    <location>
        <begin position="623"/>
        <end position="633"/>
    </location>
</feature>
<keyword id="KW-0002">3D-structure</keyword>
<keyword id="KW-0846">Cobalamin</keyword>
<keyword id="KW-0170">Cobalt</keyword>
<keyword id="KW-0903">Direct protein sequencing</keyword>
<keyword id="KW-0413">Isomerase</keyword>
<name>MUTA_PROFR</name>
<sequence>MSSTDQGTNPADTDDLTPTTLSLAGDFPKATEEQWEREVEKVLNRGRPPEKQLTFAECLKRLTVHTVDGIDIVPMYRPKDAPKKLGYPGVAPFTRGTTVRNGDMDAWDVRALHEDPDEKFTRKAILEGLERGVTSLLLRVDPDAIAPEHLDEVLSDVLLEMTKVEVFSRYDQGAAAEALVSVYERSDKPAKDLALNLGLDPIAFAALQGTEPDLTVLGDWVRRLAKFSPDSRAVTIDANIYHNAGAGDVAELAWALATGAEYVRALVEQGFTATEAFDTINFRVTATHDQFLTIARLRALREAWARIGEVFGVDEDKRGARQNAITSWRDVTREDPYVNILRGSIATFSASVGGAESITTLPFTQALGLPEDDFPLRIARNTGIVLAEEVNIGRVNDPAGGSYYVESLTRSLADAAWKEFQEVEKLGGMSKAVMTEHVTKVLDACNAERAKRLANRKQPITAVSEFPMIGARSIETKPFPAAPARKGLAWHRDSEVFEQLMDRSTSVSERPKVFLACLGTRRDFGGREGFSSPVWHIAGIDTPQVEGGTTAEIVEAFKKSGAQVADLCSSAKVYAQQGLEVAKALKAAGAKALYLSGAFKEFGDDAAEAEKLIDGRLFMGMDVVDTLSSTLDILGVAK</sequence>
<gene>
    <name type="primary">mutA</name>
</gene>
<organism>
    <name type="scientific">Propionibacterium freudenreichii subsp. shermanii</name>
    <dbReference type="NCBI Taxonomy" id="1752"/>
    <lineage>
        <taxon>Bacteria</taxon>
        <taxon>Bacillati</taxon>
        <taxon>Actinomycetota</taxon>
        <taxon>Actinomycetes</taxon>
        <taxon>Propionibacteriales</taxon>
        <taxon>Propionibacteriaceae</taxon>
        <taxon>Propionibacterium</taxon>
    </lineage>
</organism>
<evidence type="ECO:0000256" key="1">
    <source>
        <dbReference type="SAM" id="MobiDB-lite"/>
    </source>
</evidence>
<evidence type="ECO:0000305" key="2"/>
<evidence type="ECO:0007829" key="3">
    <source>
        <dbReference type="PDB" id="1REQ"/>
    </source>
</evidence>
<evidence type="ECO:0007829" key="4">
    <source>
        <dbReference type="PDB" id="2REQ"/>
    </source>
</evidence>
<evidence type="ECO:0007829" key="5">
    <source>
        <dbReference type="PDB" id="3REQ"/>
    </source>
</evidence>
<evidence type="ECO:0007829" key="6">
    <source>
        <dbReference type="PDB" id="4REQ"/>
    </source>
</evidence>
<protein>
    <recommendedName>
        <fullName>Methylmalonyl-CoA mutase small subunit</fullName>
        <ecNumber>5.4.99.2</ecNumber>
    </recommendedName>
    <alternativeName>
        <fullName>MCB-beta</fullName>
    </alternativeName>
</protein>
<proteinExistence type="evidence at protein level"/>
<comment type="function">
    <text>Catalyzes the isomerization of succinyl-CoA to methylmalonyl-CoA during synthesis of propionate from tricarboxylic acid-cycle intermediates.</text>
</comment>
<comment type="catalytic activity">
    <reaction>
        <text>(R)-methylmalonyl-CoA = succinyl-CoA</text>
        <dbReference type="Rhea" id="RHEA:22888"/>
        <dbReference type="ChEBI" id="CHEBI:57292"/>
        <dbReference type="ChEBI" id="CHEBI:57326"/>
        <dbReference type="EC" id="5.4.99.2"/>
    </reaction>
</comment>
<comment type="cofactor">
    <cofactor>
        <name>adenosylcob(III)alamin</name>
        <dbReference type="ChEBI" id="CHEBI:18408"/>
    </cofactor>
</comment>
<comment type="pathway">
    <text>Metabolic intermediate metabolism; propanoyl-CoA degradation; succinyl-CoA from propanoyl-CoA: step 3/3.</text>
</comment>
<comment type="subunit">
    <text>Heterodimer of an alpha and a beta chain.</text>
</comment>
<comment type="interaction">
    <interactant intactId="EBI-1027328">
        <id>P11652</id>
    </interactant>
    <interactant intactId="EBI-1027336">
        <id>P11653</id>
        <label>mutB</label>
    </interactant>
    <organismsDiffer>false</organismsDiffer>
    <experiments>4</experiments>
</comment>
<comment type="similarity">
    <text evidence="2">Belongs to the methylmalonyl-CoA mutase family.</text>
</comment>
<accession>P11652</accession>